<gene>
    <name type="primary">APOBEC3G</name>
</gene>
<name>ABC3G_PONPY</name>
<proteinExistence type="evidence at transcript level"/>
<protein>
    <recommendedName>
        <fullName evidence="1">DNA dC-&gt;dU-editing enzyme APOBEC-3G</fullName>
        <ecNumber evidence="1">3.5.4.38</ecNumber>
    </recommendedName>
    <alternativeName>
        <fullName>Deoxycytidine deaminase</fullName>
    </alternativeName>
</protein>
<dbReference type="EC" id="3.5.4.38" evidence="1"/>
<dbReference type="EMBL" id="AY622561">
    <property type="protein sequence ID" value="AAT44395.1"/>
    <property type="molecule type" value="Genomic_DNA"/>
</dbReference>
<dbReference type="EMBL" id="AY622554">
    <property type="protein sequence ID" value="AAT44395.1"/>
    <property type="status" value="JOINED"/>
    <property type="molecule type" value="Genomic_DNA"/>
</dbReference>
<dbReference type="EMBL" id="AY622555">
    <property type="protein sequence ID" value="AAT44395.1"/>
    <property type="status" value="JOINED"/>
    <property type="molecule type" value="Genomic_DNA"/>
</dbReference>
<dbReference type="EMBL" id="AY622556">
    <property type="protein sequence ID" value="AAT44395.1"/>
    <property type="status" value="JOINED"/>
    <property type="molecule type" value="Genomic_DNA"/>
</dbReference>
<dbReference type="EMBL" id="AY622557">
    <property type="protein sequence ID" value="AAT44395.1"/>
    <property type="status" value="JOINED"/>
    <property type="molecule type" value="Genomic_DNA"/>
</dbReference>
<dbReference type="EMBL" id="AY622558">
    <property type="protein sequence ID" value="AAT44395.1"/>
    <property type="status" value="JOINED"/>
    <property type="molecule type" value="Genomic_DNA"/>
</dbReference>
<dbReference type="EMBL" id="AY622559">
    <property type="protein sequence ID" value="AAT44395.1"/>
    <property type="status" value="JOINED"/>
    <property type="molecule type" value="Genomic_DNA"/>
</dbReference>
<dbReference type="EMBL" id="AY622560">
    <property type="protein sequence ID" value="AAT44395.1"/>
    <property type="status" value="JOINED"/>
    <property type="molecule type" value="Genomic_DNA"/>
</dbReference>
<dbReference type="EMBL" id="AY639869">
    <property type="protein sequence ID" value="AAT72158.1"/>
    <property type="molecule type" value="mRNA"/>
</dbReference>
<dbReference type="SMR" id="Q694C0"/>
<dbReference type="GO" id="GO:0005737">
    <property type="term" value="C:cytoplasm"/>
    <property type="evidence" value="ECO:0000250"/>
    <property type="project" value="UniProtKB"/>
</dbReference>
<dbReference type="GO" id="GO:0005634">
    <property type="term" value="C:nucleus"/>
    <property type="evidence" value="ECO:0007669"/>
    <property type="project" value="UniProtKB-SubCell"/>
</dbReference>
<dbReference type="GO" id="GO:0000932">
    <property type="term" value="C:P-body"/>
    <property type="evidence" value="ECO:0000250"/>
    <property type="project" value="UniProtKB"/>
</dbReference>
<dbReference type="GO" id="GO:1990904">
    <property type="term" value="C:ribonucleoprotein complex"/>
    <property type="evidence" value="ECO:0000250"/>
    <property type="project" value="UniProtKB"/>
</dbReference>
<dbReference type="GO" id="GO:0004126">
    <property type="term" value="F:cytidine deaminase activity"/>
    <property type="evidence" value="ECO:0000250"/>
    <property type="project" value="UniProtKB"/>
</dbReference>
<dbReference type="GO" id="GO:0003723">
    <property type="term" value="F:RNA binding"/>
    <property type="evidence" value="ECO:0007669"/>
    <property type="project" value="TreeGrafter"/>
</dbReference>
<dbReference type="GO" id="GO:0008270">
    <property type="term" value="F:zinc ion binding"/>
    <property type="evidence" value="ECO:0007669"/>
    <property type="project" value="InterPro"/>
</dbReference>
<dbReference type="GO" id="GO:0009972">
    <property type="term" value="P:cytidine deamination"/>
    <property type="evidence" value="ECO:0000250"/>
    <property type="project" value="UniProtKB"/>
</dbReference>
<dbReference type="GO" id="GO:0016554">
    <property type="term" value="P:cytidine to uridine editing"/>
    <property type="evidence" value="ECO:0007669"/>
    <property type="project" value="TreeGrafter"/>
</dbReference>
<dbReference type="GO" id="GO:0051607">
    <property type="term" value="P:defense response to virus"/>
    <property type="evidence" value="ECO:0000250"/>
    <property type="project" value="UniProtKB"/>
</dbReference>
<dbReference type="GO" id="GO:0070383">
    <property type="term" value="P:DNA cytosine deamination"/>
    <property type="evidence" value="ECO:0007669"/>
    <property type="project" value="TreeGrafter"/>
</dbReference>
<dbReference type="GO" id="GO:0045087">
    <property type="term" value="P:innate immune response"/>
    <property type="evidence" value="ECO:0007669"/>
    <property type="project" value="UniProtKB-KW"/>
</dbReference>
<dbReference type="GO" id="GO:0045869">
    <property type="term" value="P:negative regulation of single stranded viral RNA replication via double stranded DNA intermediate"/>
    <property type="evidence" value="ECO:0007669"/>
    <property type="project" value="TreeGrafter"/>
</dbReference>
<dbReference type="GO" id="GO:0010526">
    <property type="term" value="P:transposable element silencing"/>
    <property type="evidence" value="ECO:0000250"/>
    <property type="project" value="UniProtKB"/>
</dbReference>
<dbReference type="CDD" id="cd01283">
    <property type="entry name" value="cytidine_deaminase"/>
    <property type="match status" value="2"/>
</dbReference>
<dbReference type="FunFam" id="3.40.140.10:FF:000029">
    <property type="entry name" value="DNA dC-&gt;dU-editing enzyme APOBEC-3G"/>
    <property type="match status" value="2"/>
</dbReference>
<dbReference type="Gene3D" id="3.40.140.10">
    <property type="entry name" value="Cytidine Deaminase, domain 2"/>
    <property type="match status" value="2"/>
</dbReference>
<dbReference type="InterPro" id="IPR016192">
    <property type="entry name" value="APOBEC/CMP_deaminase_Zn-bd"/>
</dbReference>
<dbReference type="InterPro" id="IPR050610">
    <property type="entry name" value="APOBEC_Cyt_Deaminase"/>
</dbReference>
<dbReference type="InterPro" id="IPR002125">
    <property type="entry name" value="CMP_dCMP_dom"/>
</dbReference>
<dbReference type="InterPro" id="IPR016193">
    <property type="entry name" value="Cytidine_deaminase-like"/>
</dbReference>
<dbReference type="PANTHER" id="PTHR13857:SF20">
    <property type="entry name" value="DNA DC-DU-EDITING ENZYME APOBEC-3G"/>
    <property type="match status" value="1"/>
</dbReference>
<dbReference type="PANTHER" id="PTHR13857">
    <property type="entry name" value="MRNA EDITING ENZYME"/>
    <property type="match status" value="1"/>
</dbReference>
<dbReference type="Pfam" id="PF18782">
    <property type="entry name" value="NAD2"/>
    <property type="match status" value="2"/>
</dbReference>
<dbReference type="SUPFAM" id="SSF53927">
    <property type="entry name" value="Cytidine deaminase-like"/>
    <property type="match status" value="1"/>
</dbReference>
<dbReference type="PROSITE" id="PS00903">
    <property type="entry name" value="CYT_DCMP_DEAMINASES_1"/>
    <property type="match status" value="1"/>
</dbReference>
<dbReference type="PROSITE" id="PS51747">
    <property type="entry name" value="CYT_DCMP_DEAMINASES_2"/>
    <property type="match status" value="2"/>
</dbReference>
<reference key="1">
    <citation type="journal article" date="2004" name="PLoS Biol.">
        <title>Ancient adaptive evolution of the primate antiviral DNA-editing enzyme APOBEC3G.</title>
        <authorList>
            <person name="Sawyer S.L."/>
            <person name="Emerman M."/>
            <person name="Malik H.S."/>
        </authorList>
    </citation>
    <scope>NUCLEOTIDE SEQUENCE [GENOMIC DNA]</scope>
</reference>
<reference key="2">
    <citation type="journal article" date="2004" name="Hum. Mol. Genet.">
        <title>Rapid evolution of primate antiviral enzyme APOBEC3G.</title>
        <authorList>
            <person name="Zhang J."/>
            <person name="Webb D.M."/>
        </authorList>
    </citation>
    <scope>NUCLEOTIDE SEQUENCE [MRNA]</scope>
</reference>
<keyword id="KW-0051">Antiviral defense</keyword>
<keyword id="KW-0963">Cytoplasm</keyword>
<keyword id="KW-0378">Hydrolase</keyword>
<keyword id="KW-0391">Immunity</keyword>
<keyword id="KW-0399">Innate immunity</keyword>
<keyword id="KW-0479">Metal-binding</keyword>
<keyword id="KW-0539">Nucleus</keyword>
<keyword id="KW-0597">Phosphoprotein</keyword>
<keyword id="KW-0677">Repeat</keyword>
<keyword id="KW-0862">Zinc</keyword>
<comment type="function">
    <text evidence="1">DNA deaminase (cytidine deaminase) which acts as an inhibitor of retrovirus replication and retrotransposon mobility. After the penetration of retroviral nucleocapsids into target cells of infection and the initiation of reverse transcription, it can induce the conversion of cytosine to uracil in the minus-sense single-strand viral DNA, leading to G-to-A hypermutations in the subsequent plus-strand viral DNA. The resultant detrimental levels of mutations in the proviral genome, along with a deamination-independent mechanism that works prior to the proviral integration, together exert efficient antiretroviral effects in infected target cells. Selectively targets single-stranded DNA and does not deaminate double-stranded DNA or single- or double-stranded RNA (By similarity).</text>
</comment>
<comment type="catalytic activity">
    <reaction evidence="1">
        <text>a 2'-deoxycytidine in single-stranded DNA + H2O + H(+) = a 2'-deoxyuridine in single-stranded DNA + NH4(+)</text>
        <dbReference type="Rhea" id="RHEA:50948"/>
        <dbReference type="Rhea" id="RHEA-COMP:12846"/>
        <dbReference type="Rhea" id="RHEA-COMP:12847"/>
        <dbReference type="ChEBI" id="CHEBI:15377"/>
        <dbReference type="ChEBI" id="CHEBI:15378"/>
        <dbReference type="ChEBI" id="CHEBI:28938"/>
        <dbReference type="ChEBI" id="CHEBI:85452"/>
        <dbReference type="ChEBI" id="CHEBI:133902"/>
        <dbReference type="EC" id="3.5.4.38"/>
    </reaction>
</comment>
<comment type="cofactor">
    <cofactor evidence="1">
        <name>Zn(2+)</name>
        <dbReference type="ChEBI" id="CHEBI:29105"/>
    </cofactor>
</comment>
<comment type="subunit">
    <text evidence="1">Homodimer.</text>
</comment>
<comment type="subcellular location">
    <subcellularLocation>
        <location evidence="1">Cytoplasm</location>
    </subcellularLocation>
    <subcellularLocation>
        <location evidence="1">Nucleus</location>
    </subcellularLocation>
    <subcellularLocation>
        <location evidence="1">Cytoplasm</location>
        <location evidence="1">P-body</location>
    </subcellularLocation>
    <text evidence="1">Mainly cytoplasmic, small amount are found in the nucleus.</text>
</comment>
<comment type="domain">
    <text evidence="1">The CMP/dCMP deaminase domain 1 mediates RNA binding, RNA-dependent oligomerization and virion incorporation whereas the CMP/dCMP deaminase domain 2 confers deoxycytidine deaminase activity and substrate sequence specificity.</text>
</comment>
<comment type="similarity">
    <text evidence="3">Belongs to the cytidine and deoxycytidylate deaminase family.</text>
</comment>
<accession>Q694C0</accession>
<accession>Q6DVP9</accession>
<sequence>MNPQFRNMVDGMDPHKFSYNFKNRPILSRRNTVWLCYEVKTKGPSRPPLDAKIFRGQVYFELKNHPEMRFFHWFSKWRKLHRDQECEVTWYMSWSPCTKCTRNVATFLAEDPKVTLTIFVARLYYFWDPDYQEALRSLCQERDGPRANMKIMNYDEFQHCWNKFVYSQRELFEPWNNLPKYYIVLHIILGEILRHSMDPLTFTSNFNNEPCVEGRHETYLCYKVERLHNDTWVLLNQRRGFLCNQAPAIHGFPEGRHAELCFLDVIPFWKLDGKQRYRVTCFTSWSPCFRCAQEMAKFISNNQHVSLCIFAARIYDDQGRCKEGLRTLDEAEAKISIMTYDEFQHCWDTFVDHQGRPFLPWIRLHEHSEALSGRLRAILLNQGN</sequence>
<evidence type="ECO:0000250" key="1">
    <source>
        <dbReference type="UniProtKB" id="Q9HC16"/>
    </source>
</evidence>
<evidence type="ECO:0000255" key="2">
    <source>
        <dbReference type="PROSITE-ProRule" id="PRU01083"/>
    </source>
</evidence>
<evidence type="ECO:0000305" key="3"/>
<feature type="chain" id="PRO_0000171769" description="DNA dC-&gt;dU-editing enzyme APOBEC-3G">
    <location>
        <begin position="1"/>
        <end position="384"/>
    </location>
</feature>
<feature type="domain" description="CMP/dCMP-type deaminase 1" evidence="2">
    <location>
        <begin position="29"/>
        <end position="138"/>
    </location>
</feature>
<feature type="domain" description="CMP/dCMP-type deaminase 2" evidence="2">
    <location>
        <begin position="214"/>
        <end position="328"/>
    </location>
</feature>
<feature type="region of interest" description="Essential for cytoplasmic localization" evidence="3">
    <location>
        <begin position="1"/>
        <end position="60"/>
    </location>
</feature>
<feature type="region of interest" description="Necessary for homooligomerization" evidence="3">
    <location>
        <begin position="209"/>
        <end position="336"/>
    </location>
</feature>
<feature type="region of interest" description="Interaction with DNA" evidence="3">
    <location>
        <begin position="213"/>
        <end position="215"/>
    </location>
</feature>
<feature type="region of interest" description="Interaction with DNA" evidence="3">
    <location>
        <begin position="313"/>
        <end position="320"/>
    </location>
</feature>
<feature type="active site" description="Proton donor" evidence="2">
    <location>
        <position position="259"/>
    </location>
</feature>
<feature type="binding site" evidence="2">
    <location>
        <position position="65"/>
    </location>
    <ligand>
        <name>Zn(2+)</name>
        <dbReference type="ChEBI" id="CHEBI:29105"/>
        <label>1</label>
    </ligand>
</feature>
<feature type="binding site" evidence="2">
    <location>
        <position position="97"/>
    </location>
    <ligand>
        <name>Zn(2+)</name>
        <dbReference type="ChEBI" id="CHEBI:29105"/>
        <label>1</label>
    </ligand>
</feature>
<feature type="binding site" evidence="2">
    <location>
        <position position="100"/>
    </location>
    <ligand>
        <name>Zn(2+)</name>
        <dbReference type="ChEBI" id="CHEBI:29105"/>
        <label>1</label>
    </ligand>
</feature>
<feature type="binding site" evidence="1">
    <location>
        <position position="257"/>
    </location>
    <ligand>
        <name>Zn(2+)</name>
        <dbReference type="ChEBI" id="CHEBI:29105"/>
        <label>2</label>
        <note>catalytic</note>
    </ligand>
</feature>
<feature type="binding site" evidence="1">
    <location>
        <position position="288"/>
    </location>
    <ligand>
        <name>Zn(2+)</name>
        <dbReference type="ChEBI" id="CHEBI:29105"/>
        <label>2</label>
        <note>catalytic</note>
    </ligand>
</feature>
<feature type="binding site" evidence="1">
    <location>
        <position position="291"/>
    </location>
    <ligand>
        <name>Zn(2+)</name>
        <dbReference type="ChEBI" id="CHEBI:29105"/>
        <label>2</label>
        <note>catalytic</note>
    </ligand>
</feature>
<feature type="site" description="Interaction with DNA" evidence="3">
    <location>
        <position position="244"/>
    </location>
</feature>
<feature type="modified residue" description="Phosphothreonine; by PKA" evidence="1">
    <location>
        <position position="32"/>
    </location>
</feature>
<feature type="modified residue" description="Phosphothreonine; by PKA and CAMK2" evidence="1">
    <location>
        <position position="218"/>
    </location>
</feature>
<feature type="sequence conflict" description="In Ref. 2; AAT72158." evidence="3" ref="2">
    <original>N</original>
    <variation>K</variation>
    <location>
        <position position="2"/>
    </location>
</feature>
<feature type="sequence conflict" description="In Ref. 2; AAT72158." evidence="3" ref="2">
    <original>K</original>
    <variation>T</variation>
    <location>
        <position position="79"/>
    </location>
</feature>
<feature type="sequence conflict" description="In Ref. 2; AAT72158." evidence="3" ref="2">
    <original>Q</original>
    <variation>R</variation>
    <location>
        <position position="140"/>
    </location>
</feature>
<feature type="sequence conflict" description="In Ref. 2; AAT72158." evidence="3" ref="2">
    <original>C</original>
    <variation>W</variation>
    <location>
        <position position="211"/>
    </location>
</feature>
<feature type="sequence conflict" description="In Ref. 2; AAT72158." evidence="3" ref="2">
    <original>D</original>
    <variation>S</variation>
    <location>
        <position position="341"/>
    </location>
</feature>
<feature type="sequence conflict" description="In Ref. 2; AAT72158." evidence="3" ref="2">
    <original>L</original>
    <variation>Q</variation>
    <location>
        <position position="359"/>
    </location>
</feature>
<feature type="sequence conflict" description="In Ref. 2; AAT72158." evidence="3" ref="2">
    <original>IRLH</original>
    <variation>DGLE</variation>
    <location>
        <begin position="362"/>
        <end position="365"/>
    </location>
</feature>
<feature type="sequence conflict" description="In Ref. 2; AAT72158." evidence="3" ref="2">
    <original>L</original>
    <variation>W</variation>
    <location>
        <position position="371"/>
    </location>
</feature>
<feature type="sequence conflict" description="In Ref. 2; AAT72158." evidence="3" ref="2">
    <original>RLR</original>
    <variation>KLQ</variation>
    <location>
        <begin position="374"/>
        <end position="376"/>
    </location>
</feature>
<feature type="sequence conflict" description="In Ref. 2; AAT72158." evidence="3" ref="2">
    <original>L</original>
    <variation>Q</variation>
    <location>
        <position position="380"/>
    </location>
</feature>
<organism>
    <name type="scientific">Pongo pygmaeus</name>
    <name type="common">Bornean orangutan</name>
    <dbReference type="NCBI Taxonomy" id="9600"/>
    <lineage>
        <taxon>Eukaryota</taxon>
        <taxon>Metazoa</taxon>
        <taxon>Chordata</taxon>
        <taxon>Craniata</taxon>
        <taxon>Vertebrata</taxon>
        <taxon>Euteleostomi</taxon>
        <taxon>Mammalia</taxon>
        <taxon>Eutheria</taxon>
        <taxon>Euarchontoglires</taxon>
        <taxon>Primates</taxon>
        <taxon>Haplorrhini</taxon>
        <taxon>Catarrhini</taxon>
        <taxon>Hominidae</taxon>
        <taxon>Pongo</taxon>
    </lineage>
</organism>